<organism>
    <name type="scientific">Halobacterium salinarum (strain ATCC 29341 / DSM 671 / R1)</name>
    <dbReference type="NCBI Taxonomy" id="478009"/>
    <lineage>
        <taxon>Archaea</taxon>
        <taxon>Methanobacteriati</taxon>
        <taxon>Methanobacteriota</taxon>
        <taxon>Stenosarchaea group</taxon>
        <taxon>Halobacteria</taxon>
        <taxon>Halobacteriales</taxon>
        <taxon>Halobacteriaceae</taxon>
        <taxon>Halobacterium</taxon>
        <taxon>Halobacterium salinarum NRC-34001</taxon>
    </lineage>
</organism>
<name>PFDA_HALS3</name>
<comment type="function">
    <text evidence="1">Molecular chaperone capable of stabilizing a range of proteins. Seems to fulfill an ATP-independent, HSP70-like function in archaeal de novo protein folding.</text>
</comment>
<comment type="subunit">
    <text evidence="1">Heterohexamer of two alpha and four beta subunits.</text>
</comment>
<comment type="subcellular location">
    <subcellularLocation>
        <location evidence="1">Cytoplasm</location>
    </subcellularLocation>
</comment>
<comment type="similarity">
    <text evidence="1">Belongs to the prefoldin alpha subunit family.</text>
</comment>
<evidence type="ECO:0000255" key="1">
    <source>
        <dbReference type="HAMAP-Rule" id="MF_00308"/>
    </source>
</evidence>
<evidence type="ECO:0000256" key="2">
    <source>
        <dbReference type="SAM" id="MobiDB-lite"/>
    </source>
</evidence>
<feature type="chain" id="PRO_1000115626" description="Prefoldin subunit alpha">
    <location>
        <begin position="1"/>
        <end position="154"/>
    </location>
</feature>
<feature type="region of interest" description="Disordered" evidence="2">
    <location>
        <begin position="123"/>
        <end position="154"/>
    </location>
</feature>
<feature type="compositionally biased region" description="Low complexity" evidence="2">
    <location>
        <begin position="127"/>
        <end position="154"/>
    </location>
</feature>
<protein>
    <recommendedName>
        <fullName evidence="1">Prefoldin subunit alpha</fullName>
    </recommendedName>
    <alternativeName>
        <fullName evidence="1">GimC subunit alpha</fullName>
    </alternativeName>
</protein>
<keyword id="KW-0143">Chaperone</keyword>
<keyword id="KW-0963">Cytoplasm</keyword>
<sequence>MSLGGGGQQQLQQLSQEIQAIEEEVEELEADVASLRQEQTEIEEAKEALDVLETGATVQVPLGGDAYVRAEVKDMDEVVVSLGGGYAAEQDSDAAASVLDEKKATIDGRIDDVQAEIADLSEEAEQLEQQAQQAQQQMMQQQMQAQQQPQDGEQ</sequence>
<dbReference type="EMBL" id="AM774415">
    <property type="protein sequence ID" value="CAP14845.1"/>
    <property type="molecule type" value="Genomic_DNA"/>
</dbReference>
<dbReference type="RefSeq" id="WP_010903841.1">
    <property type="nucleotide sequence ID" value="NC_010364.1"/>
</dbReference>
<dbReference type="SMR" id="B0R7X6"/>
<dbReference type="EnsemblBacteria" id="CAP14845">
    <property type="protein sequence ID" value="CAP14845"/>
    <property type="gene ID" value="OE_4456R"/>
</dbReference>
<dbReference type="GeneID" id="68694976"/>
<dbReference type="KEGG" id="hsl:OE_4456R"/>
<dbReference type="HOGENOM" id="CLU_091867_1_3_2"/>
<dbReference type="PhylomeDB" id="B0R7X6"/>
<dbReference type="Proteomes" id="UP000001321">
    <property type="component" value="Chromosome"/>
</dbReference>
<dbReference type="GO" id="GO:0005737">
    <property type="term" value="C:cytoplasm"/>
    <property type="evidence" value="ECO:0007669"/>
    <property type="project" value="UniProtKB-SubCell"/>
</dbReference>
<dbReference type="GO" id="GO:0016272">
    <property type="term" value="C:prefoldin complex"/>
    <property type="evidence" value="ECO:0007669"/>
    <property type="project" value="UniProtKB-UniRule"/>
</dbReference>
<dbReference type="GO" id="GO:0051082">
    <property type="term" value="F:unfolded protein binding"/>
    <property type="evidence" value="ECO:0007669"/>
    <property type="project" value="UniProtKB-UniRule"/>
</dbReference>
<dbReference type="GO" id="GO:0006457">
    <property type="term" value="P:protein folding"/>
    <property type="evidence" value="ECO:0007669"/>
    <property type="project" value="UniProtKB-UniRule"/>
</dbReference>
<dbReference type="CDD" id="cd00584">
    <property type="entry name" value="Prefoldin_alpha"/>
    <property type="match status" value="1"/>
</dbReference>
<dbReference type="Gene3D" id="1.10.287.370">
    <property type="match status" value="1"/>
</dbReference>
<dbReference type="HAMAP" id="MF_00308">
    <property type="entry name" value="PfdA"/>
    <property type="match status" value="1"/>
</dbReference>
<dbReference type="InterPro" id="IPR011599">
    <property type="entry name" value="PFD_alpha_archaea"/>
</dbReference>
<dbReference type="InterPro" id="IPR009053">
    <property type="entry name" value="Prefoldin"/>
</dbReference>
<dbReference type="InterPro" id="IPR004127">
    <property type="entry name" value="Prefoldin_subunit_alpha"/>
</dbReference>
<dbReference type="NCBIfam" id="TIGR00293">
    <property type="entry name" value="prefoldin subunit alpha"/>
    <property type="match status" value="1"/>
</dbReference>
<dbReference type="PANTHER" id="PTHR12674">
    <property type="entry name" value="PREFOLDIN SUBUNIT 5"/>
    <property type="match status" value="1"/>
</dbReference>
<dbReference type="PANTHER" id="PTHR12674:SF2">
    <property type="entry name" value="PREFOLDIN SUBUNIT 5"/>
    <property type="match status" value="1"/>
</dbReference>
<dbReference type="Pfam" id="PF02996">
    <property type="entry name" value="Prefoldin"/>
    <property type="match status" value="1"/>
</dbReference>
<dbReference type="SUPFAM" id="SSF46579">
    <property type="entry name" value="Prefoldin"/>
    <property type="match status" value="1"/>
</dbReference>
<proteinExistence type="inferred from homology"/>
<gene>
    <name evidence="1" type="primary">pfdA</name>
    <name type="ordered locus">OE_4456R</name>
</gene>
<reference key="1">
    <citation type="journal article" date="2008" name="Genomics">
        <title>Evolution in the laboratory: the genome of Halobacterium salinarum strain R1 compared to that of strain NRC-1.</title>
        <authorList>
            <person name="Pfeiffer F."/>
            <person name="Schuster S.C."/>
            <person name="Broicher A."/>
            <person name="Falb M."/>
            <person name="Palm P."/>
            <person name="Rodewald K."/>
            <person name="Ruepp A."/>
            <person name="Soppa J."/>
            <person name="Tittor J."/>
            <person name="Oesterhelt D."/>
        </authorList>
    </citation>
    <scope>NUCLEOTIDE SEQUENCE [LARGE SCALE GENOMIC DNA]</scope>
    <source>
        <strain>ATCC 29341 / DSM 671 / R1</strain>
    </source>
</reference>
<accession>B0R7X6</accession>